<keyword id="KW-0903">Direct protein sequencing</keyword>
<keyword id="KW-1185">Reference proteome</keyword>
<keyword id="KW-0687">Ribonucleoprotein</keyword>
<keyword id="KW-0689">Ribosomal protein</keyword>
<keyword id="KW-0694">RNA-binding</keyword>
<keyword id="KW-0699">rRNA-binding</keyword>
<keyword id="KW-0346">Stress response</keyword>
<protein>
    <recommendedName>
        <fullName evidence="9">General stress protein Ctc</fullName>
        <shortName evidence="7">CTC</shortName>
    </recommendedName>
    <alternativeName>
        <fullName evidence="10">50S ribosomal protein L25</fullName>
    </alternativeName>
    <alternativeName>
        <fullName>Large ribosomal subunit protein bL25</fullName>
    </alternativeName>
</protein>
<evidence type="ECO:0000255" key="1">
    <source>
        <dbReference type="HAMAP-Rule" id="MF_01334"/>
    </source>
</evidence>
<evidence type="ECO:0000256" key="2">
    <source>
        <dbReference type="SAM" id="MobiDB-lite"/>
    </source>
</evidence>
<evidence type="ECO:0000269" key="3">
    <source>
    </source>
</evidence>
<evidence type="ECO:0000269" key="4">
    <source>
    </source>
</evidence>
<evidence type="ECO:0000269" key="5">
    <source>
    </source>
</evidence>
<evidence type="ECO:0000269" key="6">
    <source>
    </source>
</evidence>
<evidence type="ECO:0000303" key="7">
    <source>
    </source>
</evidence>
<evidence type="ECO:0000303" key="8">
    <source>
    </source>
</evidence>
<evidence type="ECO:0000303" key="9">
    <source>
    </source>
</evidence>
<evidence type="ECO:0000305" key="10"/>
<evidence type="ECO:0000305" key="11">
    <source>
    </source>
</evidence>
<sequence>MATLTAKERTDFTRSSLRNIRTSGHVPGIIYGKDTGNKPVSLDSVELIKTLRDEGKNAVITLEVSGEKHSVMVTDLQTDPLKNEITHADFQVVNMSEDIEVEVPIHLTGEAIGVKNGGVLQQPLYALTVKAKPKAIPQTIEADISSLDVNEVLTIADLPAGGDYSFNHESDEVVASILPPQQQEAAEVDEEESADAQPEGENEQ</sequence>
<organism>
    <name type="scientific">Bacillus subtilis (strain 168)</name>
    <dbReference type="NCBI Taxonomy" id="224308"/>
    <lineage>
        <taxon>Bacteria</taxon>
        <taxon>Bacillati</taxon>
        <taxon>Bacillota</taxon>
        <taxon>Bacilli</taxon>
        <taxon>Bacillales</taxon>
        <taxon>Bacillaceae</taxon>
        <taxon>Bacillus</taxon>
    </lineage>
</organism>
<reference key="1">
    <citation type="journal article" date="1994" name="DNA Res.">
        <title>Systematic sequencing of the 180 kilobase region of the Bacillus subtilis chromosome containing the replication origin.</title>
        <authorList>
            <person name="Ogasawara N."/>
            <person name="Nakai S."/>
            <person name="Yoshikawa H."/>
        </authorList>
    </citation>
    <scope>NUCLEOTIDE SEQUENCE [GENOMIC DNA]</scope>
    <source>
        <strain>168</strain>
    </source>
</reference>
<reference key="2">
    <citation type="journal article" date="1997" name="Nature">
        <title>The complete genome sequence of the Gram-positive bacterium Bacillus subtilis.</title>
        <authorList>
            <person name="Kunst F."/>
            <person name="Ogasawara N."/>
            <person name="Moszer I."/>
            <person name="Albertini A.M."/>
            <person name="Alloni G."/>
            <person name="Azevedo V."/>
            <person name="Bertero M.G."/>
            <person name="Bessieres P."/>
            <person name="Bolotin A."/>
            <person name="Borchert S."/>
            <person name="Borriss R."/>
            <person name="Boursier L."/>
            <person name="Brans A."/>
            <person name="Braun M."/>
            <person name="Brignell S.C."/>
            <person name="Bron S."/>
            <person name="Brouillet S."/>
            <person name="Bruschi C.V."/>
            <person name="Caldwell B."/>
            <person name="Capuano V."/>
            <person name="Carter N.M."/>
            <person name="Choi S.-K."/>
            <person name="Codani J.-J."/>
            <person name="Connerton I.F."/>
            <person name="Cummings N.J."/>
            <person name="Daniel R.A."/>
            <person name="Denizot F."/>
            <person name="Devine K.M."/>
            <person name="Duesterhoeft A."/>
            <person name="Ehrlich S.D."/>
            <person name="Emmerson P.T."/>
            <person name="Entian K.-D."/>
            <person name="Errington J."/>
            <person name="Fabret C."/>
            <person name="Ferrari E."/>
            <person name="Foulger D."/>
            <person name="Fritz C."/>
            <person name="Fujita M."/>
            <person name="Fujita Y."/>
            <person name="Fuma S."/>
            <person name="Galizzi A."/>
            <person name="Galleron N."/>
            <person name="Ghim S.-Y."/>
            <person name="Glaser P."/>
            <person name="Goffeau A."/>
            <person name="Golightly E.J."/>
            <person name="Grandi G."/>
            <person name="Guiseppi G."/>
            <person name="Guy B.J."/>
            <person name="Haga K."/>
            <person name="Haiech J."/>
            <person name="Harwood C.R."/>
            <person name="Henaut A."/>
            <person name="Hilbert H."/>
            <person name="Holsappel S."/>
            <person name="Hosono S."/>
            <person name="Hullo M.-F."/>
            <person name="Itaya M."/>
            <person name="Jones L.-M."/>
            <person name="Joris B."/>
            <person name="Karamata D."/>
            <person name="Kasahara Y."/>
            <person name="Klaerr-Blanchard M."/>
            <person name="Klein C."/>
            <person name="Kobayashi Y."/>
            <person name="Koetter P."/>
            <person name="Koningstein G."/>
            <person name="Krogh S."/>
            <person name="Kumano M."/>
            <person name="Kurita K."/>
            <person name="Lapidus A."/>
            <person name="Lardinois S."/>
            <person name="Lauber J."/>
            <person name="Lazarevic V."/>
            <person name="Lee S.-M."/>
            <person name="Levine A."/>
            <person name="Liu H."/>
            <person name="Masuda S."/>
            <person name="Mauel C."/>
            <person name="Medigue C."/>
            <person name="Medina N."/>
            <person name="Mellado R.P."/>
            <person name="Mizuno M."/>
            <person name="Moestl D."/>
            <person name="Nakai S."/>
            <person name="Noback M."/>
            <person name="Noone D."/>
            <person name="O'Reilly M."/>
            <person name="Ogawa K."/>
            <person name="Ogiwara A."/>
            <person name="Oudega B."/>
            <person name="Park S.-H."/>
            <person name="Parro V."/>
            <person name="Pohl T.M."/>
            <person name="Portetelle D."/>
            <person name="Porwollik S."/>
            <person name="Prescott A.M."/>
            <person name="Presecan E."/>
            <person name="Pujic P."/>
            <person name="Purnelle B."/>
            <person name="Rapoport G."/>
            <person name="Rey M."/>
            <person name="Reynolds S."/>
            <person name="Rieger M."/>
            <person name="Rivolta C."/>
            <person name="Rocha E."/>
            <person name="Roche B."/>
            <person name="Rose M."/>
            <person name="Sadaie Y."/>
            <person name="Sato T."/>
            <person name="Scanlan E."/>
            <person name="Schleich S."/>
            <person name="Schroeter R."/>
            <person name="Scoffone F."/>
            <person name="Sekiguchi J."/>
            <person name="Sekowska A."/>
            <person name="Seror S.J."/>
            <person name="Serror P."/>
            <person name="Shin B.-S."/>
            <person name="Soldo B."/>
            <person name="Sorokin A."/>
            <person name="Tacconi E."/>
            <person name="Takagi T."/>
            <person name="Takahashi H."/>
            <person name="Takemaru K."/>
            <person name="Takeuchi M."/>
            <person name="Tamakoshi A."/>
            <person name="Tanaka T."/>
            <person name="Terpstra P."/>
            <person name="Tognoni A."/>
            <person name="Tosato V."/>
            <person name="Uchiyama S."/>
            <person name="Vandenbol M."/>
            <person name="Vannier F."/>
            <person name="Vassarotti A."/>
            <person name="Viari A."/>
            <person name="Wambutt R."/>
            <person name="Wedler E."/>
            <person name="Wedler H."/>
            <person name="Weitzenegger T."/>
            <person name="Winters P."/>
            <person name="Wipat A."/>
            <person name="Yamamoto H."/>
            <person name="Yamane K."/>
            <person name="Yasumoto K."/>
            <person name="Yata K."/>
            <person name="Yoshida K."/>
            <person name="Yoshikawa H.-F."/>
            <person name="Zumstein E."/>
            <person name="Yoshikawa H."/>
            <person name="Danchin A."/>
        </authorList>
    </citation>
    <scope>NUCLEOTIDE SEQUENCE [LARGE SCALE GENOMIC DNA]</scope>
    <source>
        <strain>168</strain>
    </source>
</reference>
<reference key="3">
    <citation type="journal article" date="1989" name="Mol. Gen. Genet.">
        <title>Primary structure of the tms and prs genes of Bacillus subtilis.</title>
        <authorList>
            <person name="Nilsson D."/>
            <person name="Hove-Jensen B."/>
            <person name="Arnvig K."/>
        </authorList>
    </citation>
    <scope>NUCLEOTIDE SEQUENCE [GENOMIC DNA] OF 1-186</scope>
</reference>
<reference key="4">
    <citation type="journal article" date="1994" name="Microbiology">
        <title>Analysis of the induction of general stress proteins of Bacillus subtilis.</title>
        <authorList>
            <person name="Voelker U."/>
            <person name="Engelmann S."/>
            <person name="Maul B."/>
            <person name="Riethdorf S."/>
            <person name="Voelker A."/>
            <person name="Schmid R."/>
            <person name="Mach H."/>
            <person name="Hecker M."/>
        </authorList>
    </citation>
    <scope>PROTEIN SEQUENCE OF 2-14</scope>
    <scope>INDUCTION</scope>
    <source>
        <strain>168 / IS58</strain>
    </source>
</reference>
<reference key="5">
    <citation type="journal article" date="1988" name="Mol. Gen. Genet.">
        <title>Effects on growth and sporulation of inactivation of a Bacillus subtilis gene (ctc) transcribed in vitro by minor vegetative cell RNA polymerases (E-sigma 37, E-sigma 32).</title>
        <authorList>
            <person name="Truitt C.L."/>
            <person name="Weaver E.A."/>
            <person name="Haldenwang W.G."/>
        </authorList>
    </citation>
    <scope>DISRUPTION PHENOTYPE</scope>
    <source>
        <strain>168 / 1A3</strain>
    </source>
</reference>
<reference key="6">
    <citation type="journal article" date="2002" name="J. Mol. Microbiol. Biotechnol.">
        <title>The general stress protein Ctc of Bacillus subtilis is a ribosomal protein.</title>
        <authorList>
            <person name="Schmalisch M."/>
            <person name="Langbein I."/>
            <person name="Stuelke J."/>
        </authorList>
    </citation>
    <scope>DETECTION IN RIBOSOMES</scope>
    <scope>BINDING TO 5S RRNA</scope>
    <source>
        <strain>168 / Marburg / ATCC 6051 / DSM 10 / JCM 1465 / NBRC 13719 / NCIMB 3610 / NRRL NRS-744 / VKM B-501</strain>
    </source>
</reference>
<reference key="7">
    <citation type="journal article" date="2004" name="Biochemistry (Mosc.)">
        <title>General stress protein CTC from Bacillus subtilis specifically binds to ribosomal 5S RNA.</title>
        <authorList>
            <person name="Korepanov A.P."/>
            <person name="Gongadze G.M."/>
            <person name="Garber M.B."/>
        </authorList>
    </citation>
    <scope>BINDING TO 5S RRNA</scope>
</reference>
<dbReference type="EMBL" id="D26185">
    <property type="protein sequence ID" value="BAA05287.1"/>
    <property type="molecule type" value="Genomic_DNA"/>
</dbReference>
<dbReference type="EMBL" id="AL009126">
    <property type="protein sequence ID" value="CAB11828.1"/>
    <property type="molecule type" value="Genomic_DNA"/>
</dbReference>
<dbReference type="EMBL" id="X16518">
    <property type="protein sequence ID" value="CAA34524.1"/>
    <property type="molecule type" value="Genomic_DNA"/>
</dbReference>
<dbReference type="PIR" id="S66082">
    <property type="entry name" value="S66082"/>
</dbReference>
<dbReference type="RefSeq" id="NP_387933.1">
    <property type="nucleotide sequence ID" value="NC_000964.3"/>
</dbReference>
<dbReference type="RefSeq" id="WP_003243443.1">
    <property type="nucleotide sequence ID" value="NZ_OZ025638.1"/>
</dbReference>
<dbReference type="SMR" id="P14194"/>
<dbReference type="FunCoup" id="P14194">
    <property type="interactions" value="403"/>
</dbReference>
<dbReference type="STRING" id="224308.BSU00520"/>
<dbReference type="jPOST" id="P14194"/>
<dbReference type="PaxDb" id="224308-BSU00520"/>
<dbReference type="EnsemblBacteria" id="CAB11828">
    <property type="protein sequence ID" value="CAB11828"/>
    <property type="gene ID" value="BSU_00520"/>
</dbReference>
<dbReference type="GeneID" id="936984"/>
<dbReference type="KEGG" id="bsu:BSU00520"/>
<dbReference type="PATRIC" id="fig|224308.179.peg.52"/>
<dbReference type="eggNOG" id="COG1825">
    <property type="taxonomic scope" value="Bacteria"/>
</dbReference>
<dbReference type="InParanoid" id="P14194"/>
<dbReference type="OrthoDB" id="9790002at2"/>
<dbReference type="PhylomeDB" id="P14194"/>
<dbReference type="BioCyc" id="BSUB:BSU00520-MONOMER"/>
<dbReference type="Proteomes" id="UP000001570">
    <property type="component" value="Chromosome"/>
</dbReference>
<dbReference type="GO" id="GO:0022625">
    <property type="term" value="C:cytosolic large ribosomal subunit"/>
    <property type="evidence" value="ECO:0000318"/>
    <property type="project" value="GO_Central"/>
</dbReference>
<dbReference type="GO" id="GO:0008097">
    <property type="term" value="F:5S rRNA binding"/>
    <property type="evidence" value="ECO:0000318"/>
    <property type="project" value="GO_Central"/>
</dbReference>
<dbReference type="GO" id="GO:0003735">
    <property type="term" value="F:structural constituent of ribosome"/>
    <property type="evidence" value="ECO:0007669"/>
    <property type="project" value="InterPro"/>
</dbReference>
<dbReference type="GO" id="GO:0006412">
    <property type="term" value="P:translation"/>
    <property type="evidence" value="ECO:0000318"/>
    <property type="project" value="GO_Central"/>
</dbReference>
<dbReference type="CDD" id="cd00495">
    <property type="entry name" value="Ribosomal_L25_TL5_CTC"/>
    <property type="match status" value="1"/>
</dbReference>
<dbReference type="Gene3D" id="2.170.120.20">
    <property type="entry name" value="Ribosomal protein L25, beta domain"/>
    <property type="match status" value="1"/>
</dbReference>
<dbReference type="Gene3D" id="2.40.240.10">
    <property type="entry name" value="Ribosomal Protein L25, Chain P"/>
    <property type="match status" value="1"/>
</dbReference>
<dbReference type="HAMAP" id="MF_01334">
    <property type="entry name" value="Ribosomal_bL25_CTC"/>
    <property type="match status" value="1"/>
</dbReference>
<dbReference type="InterPro" id="IPR020056">
    <property type="entry name" value="Rbsml_bL25/Gln-tRNA_synth_N"/>
</dbReference>
<dbReference type="InterPro" id="IPR011035">
    <property type="entry name" value="Ribosomal_bL25/Gln-tRNA_synth"/>
</dbReference>
<dbReference type="InterPro" id="IPR020057">
    <property type="entry name" value="Ribosomal_bL25_b-dom"/>
</dbReference>
<dbReference type="InterPro" id="IPR037121">
    <property type="entry name" value="Ribosomal_bL25_C"/>
</dbReference>
<dbReference type="InterPro" id="IPR001021">
    <property type="entry name" value="Ribosomal_bL25_long"/>
</dbReference>
<dbReference type="InterPro" id="IPR029751">
    <property type="entry name" value="Ribosomal_L25_dom"/>
</dbReference>
<dbReference type="InterPro" id="IPR020930">
    <property type="entry name" value="Ribosomal_uL5_bac-type"/>
</dbReference>
<dbReference type="NCBIfam" id="TIGR00731">
    <property type="entry name" value="bL25_bact_ctc"/>
    <property type="match status" value="1"/>
</dbReference>
<dbReference type="NCBIfam" id="NF004133">
    <property type="entry name" value="PRK05618.2-4"/>
    <property type="match status" value="1"/>
</dbReference>
<dbReference type="PANTHER" id="PTHR33284">
    <property type="entry name" value="RIBOSOMAL PROTEIN L25/GLN-TRNA SYNTHETASE, ANTI-CODON-BINDING DOMAIN-CONTAINING PROTEIN"/>
    <property type="match status" value="1"/>
</dbReference>
<dbReference type="PANTHER" id="PTHR33284:SF1">
    <property type="entry name" value="RIBOSOMAL PROTEIN L25_GLN-TRNA SYNTHETASE, ANTI-CODON-BINDING DOMAIN-CONTAINING PROTEIN"/>
    <property type="match status" value="1"/>
</dbReference>
<dbReference type="Pfam" id="PF01386">
    <property type="entry name" value="Ribosomal_L25p"/>
    <property type="match status" value="1"/>
</dbReference>
<dbReference type="Pfam" id="PF14693">
    <property type="entry name" value="Ribosomal_TL5_C"/>
    <property type="match status" value="1"/>
</dbReference>
<dbReference type="SUPFAM" id="SSF50715">
    <property type="entry name" value="Ribosomal protein L25-like"/>
    <property type="match status" value="1"/>
</dbReference>
<gene>
    <name evidence="8" type="primary">ctc</name>
    <name type="ordered locus">BSU00520</name>
</gene>
<proteinExistence type="evidence at protein level"/>
<feature type="initiator methionine" description="Removed" evidence="6">
    <location>
        <position position="1"/>
    </location>
</feature>
<feature type="chain" id="PRO_0000181512" description="General stress protein Ctc">
    <location>
        <begin position="2"/>
        <end position="204"/>
    </location>
</feature>
<feature type="region of interest" description="Disordered" evidence="2">
    <location>
        <begin position="177"/>
        <end position="204"/>
    </location>
</feature>
<feature type="compositionally biased region" description="Acidic residues" evidence="2">
    <location>
        <begin position="186"/>
        <end position="204"/>
    </location>
</feature>
<feature type="sequence variant" description="In strain: IS58.">
    <original>A</original>
    <variation>R</variation>
    <location>
        <position position="2"/>
    </location>
</feature>
<feature type="sequence variant" description="In strain: IS58.">
    <original>T</original>
    <variation>Q</variation>
    <location>
        <position position="10"/>
    </location>
</feature>
<feature type="sequence variant" description="In strain: IS58.">
    <original>T</original>
    <variation>I</variation>
    <location>
        <position position="13"/>
    </location>
</feature>
<comment type="function">
    <text evidence="11">Not required for exponential growth; probably functions in vegetatively growing cells, maybe required for accurate translation under stress conditions.</text>
</comment>
<comment type="subunit">
    <text evidence="3 4">Part of the ribosome (presumably the 50S subunit) under heat-stress but not control growth conditions. Binds 5S rRNA.</text>
</comment>
<comment type="developmental stage">
    <text>Expressed at the end of exponential growth under conditions in which the enzymes of the TCA cycle are repressed.</text>
</comment>
<comment type="induction">
    <text evidence="3 6">By heat shock, salt stress, oxidative stress, glucose limitation and oxygen limitation.</text>
</comment>
<comment type="disruption phenotype">
    <text evidence="5">Cells sporulate poorly at 48 degrees Celsius.</text>
</comment>
<comment type="similarity">
    <text evidence="1">Belongs to the bacterial ribosomal protein bL25 family. CTC subfamily.</text>
</comment>
<accession>P14194</accession>
<name>CTC_BACSU</name>